<gene>
    <name evidence="1" type="primary">mshC</name>
    <name type="ordered locus">SCAB_73151</name>
</gene>
<reference key="1">
    <citation type="journal article" date="2010" name="Mol. Plant Microbe Interact.">
        <title>Streptomyces scabies 87-22 contains a coronafacic acid-like biosynthetic cluster that contributes to plant-microbe interactions.</title>
        <authorList>
            <person name="Bignell D.R."/>
            <person name="Seipke R.F."/>
            <person name="Huguet-Tapia J.C."/>
            <person name="Chambers A.H."/>
            <person name="Parry R.J."/>
            <person name="Loria R."/>
        </authorList>
    </citation>
    <scope>NUCLEOTIDE SEQUENCE [LARGE SCALE GENOMIC DNA]</scope>
    <source>
        <strain>87.22</strain>
    </source>
</reference>
<name>MSHC_STRSW</name>
<protein>
    <recommendedName>
        <fullName evidence="1">L-cysteine:1D-myo-inositol 2-amino-2-deoxy-alpha-D-glucopyranoside ligase</fullName>
        <shortName evidence="1">L-Cys:GlcN-Ins ligase</shortName>
        <ecNumber evidence="1">6.3.1.13</ecNumber>
    </recommendedName>
    <alternativeName>
        <fullName evidence="1">Mycothiol ligase</fullName>
        <shortName evidence="1">MSH ligase</shortName>
    </alternativeName>
</protein>
<evidence type="ECO:0000255" key="1">
    <source>
        <dbReference type="HAMAP-Rule" id="MF_01697"/>
    </source>
</evidence>
<accession>C9Z2Z3</accession>
<organism>
    <name type="scientific">Streptomyces scabiei (strain 87.22)</name>
    <dbReference type="NCBI Taxonomy" id="680198"/>
    <lineage>
        <taxon>Bacteria</taxon>
        <taxon>Bacillati</taxon>
        <taxon>Actinomycetota</taxon>
        <taxon>Actinomycetes</taxon>
        <taxon>Kitasatosporales</taxon>
        <taxon>Streptomycetaceae</taxon>
        <taxon>Streptomyces</taxon>
    </lineage>
</organism>
<sequence>MHAWPASEVPVLPGKGRDLRIHDTATDGLITLDPGPVARIYVCGITPYDATHMGHAATYNAFDLVQRVWLDTKRQVHYVQNVTDVDDPLLERAARDDIDWVALAEKETALFREDMTALRMLPPRHYIGAVEAIPGIVPLVERLLASGAAYELEGDVYFSVEADPDFGKVSRLDAATMRLLSAERGGDPDRAGKKNPLDPMLWMAAREGEPSWDGGSLGRGRPGWHIECVAIALDHLGMGFDVQGGGSDLAFPHHEMGASHAQALTGEFPMAKAYVHAGMVALHGEKMSKSKGNLVFVSALRRDGVDPAAIRLALLAHHYRADWEWTDQVLQDAVDRLGRWRAAVSRPDGPPAEALVEEIREALAHDLDAPAALAAVDRWAALQEERGGTDEGAPGVVSRAVDALLGVAL</sequence>
<dbReference type="EC" id="6.3.1.13" evidence="1"/>
<dbReference type="EMBL" id="FN554889">
    <property type="protein sequence ID" value="CBG74302.1"/>
    <property type="molecule type" value="Genomic_DNA"/>
</dbReference>
<dbReference type="RefSeq" id="WP_013004843.1">
    <property type="nucleotide sequence ID" value="NC_013929.1"/>
</dbReference>
<dbReference type="SMR" id="C9Z2Z3"/>
<dbReference type="STRING" id="680198.SCAB_73151"/>
<dbReference type="GeneID" id="24306927"/>
<dbReference type="KEGG" id="scb:SCAB_73151"/>
<dbReference type="eggNOG" id="COG0215">
    <property type="taxonomic scope" value="Bacteria"/>
</dbReference>
<dbReference type="HOGENOM" id="CLU_013528_0_0_11"/>
<dbReference type="Proteomes" id="UP000001444">
    <property type="component" value="Chromosome"/>
</dbReference>
<dbReference type="GO" id="GO:0005829">
    <property type="term" value="C:cytosol"/>
    <property type="evidence" value="ECO:0007669"/>
    <property type="project" value="TreeGrafter"/>
</dbReference>
<dbReference type="GO" id="GO:0005524">
    <property type="term" value="F:ATP binding"/>
    <property type="evidence" value="ECO:0007669"/>
    <property type="project" value="UniProtKB-KW"/>
</dbReference>
<dbReference type="GO" id="GO:0035446">
    <property type="term" value="F:cysteine-glucosaminylinositol ligase activity"/>
    <property type="evidence" value="ECO:0007669"/>
    <property type="project" value="UniProtKB-UniRule"/>
</dbReference>
<dbReference type="GO" id="GO:0004817">
    <property type="term" value="F:cysteine-tRNA ligase activity"/>
    <property type="evidence" value="ECO:0007669"/>
    <property type="project" value="TreeGrafter"/>
</dbReference>
<dbReference type="GO" id="GO:0008270">
    <property type="term" value="F:zinc ion binding"/>
    <property type="evidence" value="ECO:0007669"/>
    <property type="project" value="UniProtKB-UniRule"/>
</dbReference>
<dbReference type="GO" id="GO:0006423">
    <property type="term" value="P:cysteinyl-tRNA aminoacylation"/>
    <property type="evidence" value="ECO:0007669"/>
    <property type="project" value="TreeGrafter"/>
</dbReference>
<dbReference type="GO" id="GO:0010125">
    <property type="term" value="P:mycothiol biosynthetic process"/>
    <property type="evidence" value="ECO:0007669"/>
    <property type="project" value="UniProtKB-UniRule"/>
</dbReference>
<dbReference type="FunFam" id="1.20.120.640:FF:000001">
    <property type="entry name" value="L-cysteine:1D-myo-inositol 2-amino-2-deoxy-alpha-D-glucopyranoside ligase"/>
    <property type="match status" value="1"/>
</dbReference>
<dbReference type="FunFam" id="3.40.50.620:FF:000134">
    <property type="entry name" value="L-cysteine:1D-myo-inositol 2-amino-2-deoxy-alpha-D-glucopyranoside ligase"/>
    <property type="match status" value="1"/>
</dbReference>
<dbReference type="Gene3D" id="1.20.120.640">
    <property type="entry name" value="Anticodon-binding domain of a subclass of class I aminoacyl-tRNA synthetases"/>
    <property type="match status" value="1"/>
</dbReference>
<dbReference type="Gene3D" id="3.40.50.620">
    <property type="entry name" value="HUPs"/>
    <property type="match status" value="1"/>
</dbReference>
<dbReference type="HAMAP" id="MF_01697">
    <property type="entry name" value="MshC"/>
    <property type="match status" value="1"/>
</dbReference>
<dbReference type="InterPro" id="IPR024909">
    <property type="entry name" value="Cys-tRNA/MSH_ligase"/>
</dbReference>
<dbReference type="InterPro" id="IPR017812">
    <property type="entry name" value="Mycothiol_ligase_MshC"/>
</dbReference>
<dbReference type="InterPro" id="IPR014729">
    <property type="entry name" value="Rossmann-like_a/b/a_fold"/>
</dbReference>
<dbReference type="InterPro" id="IPR032678">
    <property type="entry name" value="tRNA-synt_1_cat_dom"/>
</dbReference>
<dbReference type="NCBIfam" id="TIGR03447">
    <property type="entry name" value="mycothiol_MshC"/>
    <property type="match status" value="1"/>
</dbReference>
<dbReference type="PANTHER" id="PTHR10890:SF3">
    <property type="entry name" value="CYSTEINE--TRNA LIGASE, CYTOPLASMIC"/>
    <property type="match status" value="1"/>
</dbReference>
<dbReference type="PANTHER" id="PTHR10890">
    <property type="entry name" value="CYSTEINYL-TRNA SYNTHETASE"/>
    <property type="match status" value="1"/>
</dbReference>
<dbReference type="Pfam" id="PF01406">
    <property type="entry name" value="tRNA-synt_1e"/>
    <property type="match status" value="1"/>
</dbReference>
<dbReference type="PRINTS" id="PR00983">
    <property type="entry name" value="TRNASYNTHCYS"/>
</dbReference>
<dbReference type="SUPFAM" id="SSF52374">
    <property type="entry name" value="Nucleotidylyl transferase"/>
    <property type="match status" value="1"/>
</dbReference>
<comment type="function">
    <text evidence="1">Catalyzes the ATP-dependent condensation of GlcN-Ins and L-cysteine to form L-Cys-GlcN-Ins.</text>
</comment>
<comment type="catalytic activity">
    <reaction evidence="1">
        <text>1D-myo-inositol 2-amino-2-deoxy-alpha-D-glucopyranoside + L-cysteine + ATP = 1D-myo-inositol 2-(L-cysteinylamino)-2-deoxy-alpha-D-glucopyranoside + AMP + diphosphate + H(+)</text>
        <dbReference type="Rhea" id="RHEA:26176"/>
        <dbReference type="ChEBI" id="CHEBI:15378"/>
        <dbReference type="ChEBI" id="CHEBI:30616"/>
        <dbReference type="ChEBI" id="CHEBI:33019"/>
        <dbReference type="ChEBI" id="CHEBI:35235"/>
        <dbReference type="ChEBI" id="CHEBI:58886"/>
        <dbReference type="ChEBI" id="CHEBI:58887"/>
        <dbReference type="ChEBI" id="CHEBI:456215"/>
        <dbReference type="EC" id="6.3.1.13"/>
    </reaction>
</comment>
<comment type="cofactor">
    <cofactor evidence="1">
        <name>Zn(2+)</name>
        <dbReference type="ChEBI" id="CHEBI:29105"/>
    </cofactor>
    <text evidence="1">Binds 1 zinc ion per subunit.</text>
</comment>
<comment type="subunit">
    <text evidence="1">Monomer.</text>
</comment>
<comment type="similarity">
    <text evidence="1">Belongs to the class-I aminoacyl-tRNA synthetase family. MshC subfamily.</text>
</comment>
<keyword id="KW-0067">ATP-binding</keyword>
<keyword id="KW-0436">Ligase</keyword>
<keyword id="KW-0479">Metal-binding</keyword>
<keyword id="KW-0547">Nucleotide-binding</keyword>
<keyword id="KW-1185">Reference proteome</keyword>
<keyword id="KW-0862">Zinc</keyword>
<feature type="chain" id="PRO_0000400488" description="L-cysteine:1D-myo-inositol 2-amino-2-deoxy-alpha-D-glucopyranoside ligase">
    <location>
        <begin position="1"/>
        <end position="409"/>
    </location>
</feature>
<feature type="short sequence motif" description="'HIGH' region" evidence="1">
    <location>
        <begin position="45"/>
        <end position="55"/>
    </location>
</feature>
<feature type="short sequence motif" description="'ERGGDP' region" evidence="1">
    <location>
        <begin position="183"/>
        <end position="188"/>
    </location>
</feature>
<feature type="short sequence motif" description="'KMSKS' region" evidence="1">
    <location>
        <begin position="286"/>
        <end position="290"/>
    </location>
</feature>
<feature type="binding site" evidence="1">
    <location>
        <begin position="43"/>
        <end position="46"/>
    </location>
    <ligand>
        <name>L-cysteinyl-5'-AMP</name>
        <dbReference type="ChEBI" id="CHEBI:144924"/>
    </ligand>
</feature>
<feature type="binding site" evidence="1">
    <location>
        <position position="43"/>
    </location>
    <ligand>
        <name>Zn(2+)</name>
        <dbReference type="ChEBI" id="CHEBI:29105"/>
    </ligand>
</feature>
<feature type="binding site" evidence="1">
    <location>
        <position position="58"/>
    </location>
    <ligand>
        <name>L-cysteinyl-5'-AMP</name>
        <dbReference type="ChEBI" id="CHEBI:144924"/>
    </ligand>
</feature>
<feature type="binding site" evidence="1">
    <location>
        <begin position="81"/>
        <end position="83"/>
    </location>
    <ligand>
        <name>L-cysteinyl-5'-AMP</name>
        <dbReference type="ChEBI" id="CHEBI:144924"/>
    </ligand>
</feature>
<feature type="binding site" evidence="1">
    <location>
        <position position="224"/>
    </location>
    <ligand>
        <name>L-cysteinyl-5'-AMP</name>
        <dbReference type="ChEBI" id="CHEBI:144924"/>
    </ligand>
</feature>
<feature type="binding site" evidence="1">
    <location>
        <position position="228"/>
    </location>
    <ligand>
        <name>Zn(2+)</name>
        <dbReference type="ChEBI" id="CHEBI:29105"/>
    </ligand>
</feature>
<feature type="binding site" evidence="1">
    <location>
        <begin position="246"/>
        <end position="248"/>
    </location>
    <ligand>
        <name>L-cysteinyl-5'-AMP</name>
        <dbReference type="ChEBI" id="CHEBI:144924"/>
    </ligand>
</feature>
<feature type="binding site" evidence="1">
    <location>
        <position position="253"/>
    </location>
    <ligand>
        <name>Zn(2+)</name>
        <dbReference type="ChEBI" id="CHEBI:29105"/>
    </ligand>
</feature>
<feature type="binding site" evidence="1">
    <location>
        <position position="280"/>
    </location>
    <ligand>
        <name>L-cysteinyl-5'-AMP</name>
        <dbReference type="ChEBI" id="CHEBI:144924"/>
    </ligand>
</feature>
<proteinExistence type="inferred from homology"/>